<feature type="chain" id="PRO_0000104464" description="Large ribosomal subunit protein uL11">
    <location>
        <begin position="1"/>
        <end position="166"/>
    </location>
</feature>
<feature type="modified residue" description="N5-methylarginine" evidence="1">
    <location>
        <position position="67"/>
    </location>
</feature>
<evidence type="ECO:0000250" key="1"/>
<evidence type="ECO:0000269" key="2">
    <source>
    </source>
</evidence>
<evidence type="ECO:0000305" key="3"/>
<keyword id="KW-0488">Methylation</keyword>
<keyword id="KW-1185">Reference proteome</keyword>
<keyword id="KW-0687">Ribonucleoprotein</keyword>
<keyword id="KW-0689">Ribosomal protein</keyword>
<keyword id="KW-0694">RNA-binding</keyword>
<accession>Q8SR84</accession>
<protein>
    <recommendedName>
        <fullName evidence="3">Large ribosomal subunit protein uL11</fullName>
    </recommendedName>
    <alternativeName>
        <fullName>60S ribosomal protein L12</fullName>
    </alternativeName>
</protein>
<gene>
    <name type="primary">RPL12</name>
    <name type="ordered locus">ECU08_2010</name>
</gene>
<sequence length="166" mass="18008">MAEQKGMDPDTKYIKLQVVGGEVPGATLAQRVGPLGLSSKVVGEDIKKATADYKSLKVHVQLAIKDRKATVEVQPSVATLIIKSLKEPPRDRKKEKNILHNGSLRMTEVVDIARIARSSRSYSNSLSGTVKEVLGTCKSIGCKVDGKCPKEVTREIDAGEIKLPDQ</sequence>
<reference key="1">
    <citation type="journal article" date="2001" name="Nature">
        <title>Genome sequence and gene compaction of the eukaryote parasite Encephalitozoon cuniculi.</title>
        <authorList>
            <person name="Katinka M.D."/>
            <person name="Duprat S."/>
            <person name="Cornillot E."/>
            <person name="Metenier G."/>
            <person name="Thomarat F."/>
            <person name="Prensier G."/>
            <person name="Barbe V."/>
            <person name="Peyretaillade E."/>
            <person name="Brottier P."/>
            <person name="Wincker P."/>
            <person name="Delbac F."/>
            <person name="El Alaoui H."/>
            <person name="Peyret P."/>
            <person name="Saurin W."/>
            <person name="Gouy M."/>
            <person name="Weissenbach J."/>
            <person name="Vivares C.P."/>
        </authorList>
    </citation>
    <scope>NUCLEOTIDE SEQUENCE [LARGE SCALE GENOMIC DNA]</scope>
    <source>
        <strain>GB-M1</strain>
    </source>
</reference>
<reference key="2">
    <citation type="journal article" date="2006" name="Proteomics">
        <title>Proteomic analysis of the eukaryotic parasite Encephalitozoon cuniculi (microsporidia): a reference map for proteins expressed in late sporogonial stages.</title>
        <authorList>
            <person name="Brosson D."/>
            <person name="Kuhn L."/>
            <person name="Delbac F."/>
            <person name="Garin J."/>
            <person name="Vivares C.P."/>
            <person name="Texier C."/>
        </authorList>
    </citation>
    <scope>IDENTIFICATION BY MASS SPECTROMETRY [LARGE SCALE ANALYSIS]</scope>
    <scope>DEVELOPMENTAL STAGE</scope>
</reference>
<proteinExistence type="evidence at protein level"/>
<name>RL12_ENCCU</name>
<dbReference type="EMBL" id="AL590448">
    <property type="protein sequence ID" value="CAD26503.1"/>
    <property type="molecule type" value="Genomic_DNA"/>
</dbReference>
<dbReference type="RefSeq" id="NP_597327.1">
    <property type="nucleotide sequence ID" value="NM_001041936.1"/>
</dbReference>
<dbReference type="SMR" id="Q8SR84"/>
<dbReference type="FunCoup" id="Q8SR84">
    <property type="interactions" value="164"/>
</dbReference>
<dbReference type="STRING" id="284813.Q8SR84"/>
<dbReference type="GeneID" id="859749"/>
<dbReference type="KEGG" id="ecu:ECU08_2010"/>
<dbReference type="VEuPathDB" id="MicrosporidiaDB:ECU08_2010"/>
<dbReference type="HOGENOM" id="CLU_074237_5_0_1"/>
<dbReference type="InParanoid" id="Q8SR84"/>
<dbReference type="OMA" id="QPPHDVI"/>
<dbReference type="OrthoDB" id="1478556at2759"/>
<dbReference type="Proteomes" id="UP000000819">
    <property type="component" value="Chromosome VIII"/>
</dbReference>
<dbReference type="GO" id="GO:0022625">
    <property type="term" value="C:cytosolic large ribosomal subunit"/>
    <property type="evidence" value="ECO:0007669"/>
    <property type="project" value="TreeGrafter"/>
</dbReference>
<dbReference type="GO" id="GO:0070180">
    <property type="term" value="F:large ribosomal subunit rRNA binding"/>
    <property type="evidence" value="ECO:0007669"/>
    <property type="project" value="TreeGrafter"/>
</dbReference>
<dbReference type="GO" id="GO:0003735">
    <property type="term" value="F:structural constituent of ribosome"/>
    <property type="evidence" value="ECO:0007669"/>
    <property type="project" value="InterPro"/>
</dbReference>
<dbReference type="GO" id="GO:0006412">
    <property type="term" value="P:translation"/>
    <property type="evidence" value="ECO:0007669"/>
    <property type="project" value="InterPro"/>
</dbReference>
<dbReference type="Gene3D" id="1.10.10.250">
    <property type="entry name" value="Ribosomal protein L11, C-terminal domain"/>
    <property type="match status" value="1"/>
</dbReference>
<dbReference type="Gene3D" id="3.30.1550.10">
    <property type="entry name" value="Ribosomal protein L11/L12, N-terminal domain"/>
    <property type="match status" value="1"/>
</dbReference>
<dbReference type="HAMAP" id="MF_00736">
    <property type="entry name" value="Ribosomal_uL11"/>
    <property type="match status" value="1"/>
</dbReference>
<dbReference type="InterPro" id="IPR000911">
    <property type="entry name" value="Ribosomal_uL11"/>
</dbReference>
<dbReference type="InterPro" id="IPR020783">
    <property type="entry name" value="Ribosomal_uL11_C"/>
</dbReference>
<dbReference type="InterPro" id="IPR036769">
    <property type="entry name" value="Ribosomal_uL11_C_sf"/>
</dbReference>
<dbReference type="InterPro" id="IPR020785">
    <property type="entry name" value="Ribosomal_uL11_CS"/>
</dbReference>
<dbReference type="InterPro" id="IPR020784">
    <property type="entry name" value="Ribosomal_uL11_N"/>
</dbReference>
<dbReference type="InterPro" id="IPR036796">
    <property type="entry name" value="Ribosomal_uL11_N_sf"/>
</dbReference>
<dbReference type="PANTHER" id="PTHR11661">
    <property type="entry name" value="60S RIBOSOMAL PROTEIN L12"/>
    <property type="match status" value="1"/>
</dbReference>
<dbReference type="PANTHER" id="PTHR11661:SF2">
    <property type="entry name" value="LARGE RIBOSOMAL SUBUNIT PROTEIN UL11"/>
    <property type="match status" value="1"/>
</dbReference>
<dbReference type="Pfam" id="PF00298">
    <property type="entry name" value="Ribosomal_L11"/>
    <property type="match status" value="1"/>
</dbReference>
<dbReference type="Pfam" id="PF03946">
    <property type="entry name" value="Ribosomal_L11_N"/>
    <property type="match status" value="1"/>
</dbReference>
<dbReference type="SMART" id="SM00649">
    <property type="entry name" value="RL11"/>
    <property type="match status" value="1"/>
</dbReference>
<dbReference type="SUPFAM" id="SSF54747">
    <property type="entry name" value="Ribosomal L11/L12e N-terminal domain"/>
    <property type="match status" value="1"/>
</dbReference>
<dbReference type="SUPFAM" id="SSF46906">
    <property type="entry name" value="Ribosomal protein L11, C-terminal domain"/>
    <property type="match status" value="1"/>
</dbReference>
<dbReference type="PROSITE" id="PS00359">
    <property type="entry name" value="RIBOSOMAL_L11"/>
    <property type="match status" value="1"/>
</dbReference>
<comment type="developmental stage">
    <text evidence="2">Expressed in late sporogonial stages.</text>
</comment>
<comment type="similarity">
    <text evidence="3">Belongs to the universal ribosomal protein uL11 family.</text>
</comment>
<organism>
    <name type="scientific">Encephalitozoon cuniculi (strain GB-M1)</name>
    <name type="common">Microsporidian parasite</name>
    <dbReference type="NCBI Taxonomy" id="284813"/>
    <lineage>
        <taxon>Eukaryota</taxon>
        <taxon>Fungi</taxon>
        <taxon>Fungi incertae sedis</taxon>
        <taxon>Microsporidia</taxon>
        <taxon>Unikaryonidae</taxon>
        <taxon>Encephalitozoon</taxon>
    </lineage>
</organism>